<gene>
    <name evidence="2" type="primary">rpsQ</name>
</gene>
<feature type="initiator methionine" description="Removed" evidence="1">
    <location>
        <position position="1"/>
    </location>
</feature>
<feature type="chain" id="PRO_0000128460" description="Small ribosomal subunit protein uS17">
    <location>
        <begin position="2"/>
        <end position="85"/>
    </location>
</feature>
<dbReference type="EMBL" id="D64071">
    <property type="protein sequence ID" value="BAA10956.1"/>
    <property type="molecule type" value="Genomic_DNA"/>
</dbReference>
<dbReference type="RefSeq" id="WP_005539352.1">
    <property type="nucleotide sequence ID" value="NZ_VSEW01000015.1"/>
</dbReference>
<dbReference type="SMR" id="P55829"/>
<dbReference type="STRING" id="714.ACT75_03715"/>
<dbReference type="GeneID" id="77210687"/>
<dbReference type="eggNOG" id="COG0186">
    <property type="taxonomic scope" value="Bacteria"/>
</dbReference>
<dbReference type="OMA" id="HPMYGKF"/>
<dbReference type="OrthoDB" id="9811714at2"/>
<dbReference type="GO" id="GO:0022627">
    <property type="term" value="C:cytosolic small ribosomal subunit"/>
    <property type="evidence" value="ECO:0007669"/>
    <property type="project" value="TreeGrafter"/>
</dbReference>
<dbReference type="GO" id="GO:0019843">
    <property type="term" value="F:rRNA binding"/>
    <property type="evidence" value="ECO:0007669"/>
    <property type="project" value="UniProtKB-UniRule"/>
</dbReference>
<dbReference type="GO" id="GO:0003735">
    <property type="term" value="F:structural constituent of ribosome"/>
    <property type="evidence" value="ECO:0007669"/>
    <property type="project" value="InterPro"/>
</dbReference>
<dbReference type="GO" id="GO:0006412">
    <property type="term" value="P:translation"/>
    <property type="evidence" value="ECO:0007669"/>
    <property type="project" value="UniProtKB-UniRule"/>
</dbReference>
<dbReference type="CDD" id="cd00364">
    <property type="entry name" value="Ribosomal_uS17"/>
    <property type="match status" value="1"/>
</dbReference>
<dbReference type="FunFam" id="2.40.50.140:FF:000014">
    <property type="entry name" value="30S ribosomal protein S17"/>
    <property type="match status" value="1"/>
</dbReference>
<dbReference type="Gene3D" id="2.40.50.140">
    <property type="entry name" value="Nucleic acid-binding proteins"/>
    <property type="match status" value="1"/>
</dbReference>
<dbReference type="HAMAP" id="MF_01345_B">
    <property type="entry name" value="Ribosomal_uS17_B"/>
    <property type="match status" value="1"/>
</dbReference>
<dbReference type="InterPro" id="IPR012340">
    <property type="entry name" value="NA-bd_OB-fold"/>
</dbReference>
<dbReference type="InterPro" id="IPR000266">
    <property type="entry name" value="Ribosomal_uS17"/>
</dbReference>
<dbReference type="InterPro" id="IPR019984">
    <property type="entry name" value="Ribosomal_uS17_bact/chlr"/>
</dbReference>
<dbReference type="InterPro" id="IPR019979">
    <property type="entry name" value="Ribosomal_uS17_CS"/>
</dbReference>
<dbReference type="NCBIfam" id="NF004123">
    <property type="entry name" value="PRK05610.1"/>
    <property type="match status" value="1"/>
</dbReference>
<dbReference type="NCBIfam" id="TIGR03635">
    <property type="entry name" value="uS17_bact"/>
    <property type="match status" value="1"/>
</dbReference>
<dbReference type="PANTHER" id="PTHR10744">
    <property type="entry name" value="40S RIBOSOMAL PROTEIN S11 FAMILY MEMBER"/>
    <property type="match status" value="1"/>
</dbReference>
<dbReference type="PANTHER" id="PTHR10744:SF1">
    <property type="entry name" value="SMALL RIBOSOMAL SUBUNIT PROTEIN US17M"/>
    <property type="match status" value="1"/>
</dbReference>
<dbReference type="Pfam" id="PF00366">
    <property type="entry name" value="Ribosomal_S17"/>
    <property type="match status" value="1"/>
</dbReference>
<dbReference type="PRINTS" id="PR00973">
    <property type="entry name" value="RIBOSOMALS17"/>
</dbReference>
<dbReference type="SUPFAM" id="SSF50249">
    <property type="entry name" value="Nucleic acid-binding proteins"/>
    <property type="match status" value="1"/>
</dbReference>
<dbReference type="PROSITE" id="PS00056">
    <property type="entry name" value="RIBOSOMAL_S17"/>
    <property type="match status" value="1"/>
</dbReference>
<organism>
    <name type="scientific">Aggregatibacter actinomycetemcomitans</name>
    <name type="common">Actinobacillus actinomycetemcomitans</name>
    <name type="synonym">Haemophilus actinomycetemcomitans</name>
    <dbReference type="NCBI Taxonomy" id="714"/>
    <lineage>
        <taxon>Bacteria</taxon>
        <taxon>Pseudomonadati</taxon>
        <taxon>Pseudomonadota</taxon>
        <taxon>Gammaproteobacteria</taxon>
        <taxon>Pasteurellales</taxon>
        <taxon>Pasteurellaceae</taxon>
        <taxon>Aggregatibacter</taxon>
    </lineage>
</organism>
<proteinExistence type="inferred from homology"/>
<keyword id="KW-0687">Ribonucleoprotein</keyword>
<keyword id="KW-0689">Ribosomal protein</keyword>
<keyword id="KW-0694">RNA-binding</keyword>
<keyword id="KW-0699">rRNA-binding</keyword>
<comment type="function">
    <text evidence="2">One of the primary rRNA binding proteins, it binds specifically to the 5'-end of 16S ribosomal RNA.</text>
</comment>
<comment type="subunit">
    <text evidence="2">Part of the 30S ribosomal subunit.</text>
</comment>
<comment type="similarity">
    <text evidence="2">Belongs to the universal ribosomal protein uS17 family.</text>
</comment>
<protein>
    <recommendedName>
        <fullName evidence="2">Small ribosomal subunit protein uS17</fullName>
    </recommendedName>
    <alternativeName>
        <fullName evidence="3">30S ribosomal protein S17</fullName>
    </alternativeName>
</protein>
<evidence type="ECO:0000250" key="1"/>
<evidence type="ECO:0000255" key="2">
    <source>
        <dbReference type="HAMAP-Rule" id="MF_01345"/>
    </source>
</evidence>
<evidence type="ECO:0000305" key="3"/>
<sequence>MTDKIRSVQGRVVSDKMEKSFVVAIERKVKHPLYGKFIRRTTKLHVHDENNEAKLGDLVEVRECRPISKTKSWTLVRVVEKAVIA</sequence>
<name>RS17_AGGAC</name>
<reference key="1">
    <citation type="journal article" date="1996" name="Microbiology">
        <title>Molecular analysis of a new insertion sequence from Actinobacillus (Haemophilus) actinomycetemcomitans FDC Y4.</title>
        <authorList>
            <person name="Hayashida H."/>
            <person name="Hotokezaka H."/>
            <person name="Ohara N."/>
            <person name="Kimura M."/>
            <person name="Takagi O."/>
            <person name="Yamada T."/>
        </authorList>
    </citation>
    <scope>NUCLEOTIDE SEQUENCE [GENOMIC DNA]</scope>
    <source>
        <strain>ATCC 43718 / FDC Y4 / Serotype b</strain>
    </source>
</reference>
<accession>P55829</accession>